<organism>
    <name type="scientific">Escherichia coli (strain SMS-3-5 / SECEC)</name>
    <dbReference type="NCBI Taxonomy" id="439855"/>
    <lineage>
        <taxon>Bacteria</taxon>
        <taxon>Pseudomonadati</taxon>
        <taxon>Pseudomonadota</taxon>
        <taxon>Gammaproteobacteria</taxon>
        <taxon>Enterobacterales</taxon>
        <taxon>Enterobacteriaceae</taxon>
        <taxon>Escherichia</taxon>
    </lineage>
</organism>
<name>MDTB_ECOSM</name>
<evidence type="ECO:0000255" key="1">
    <source>
        <dbReference type="HAMAP-Rule" id="MF_01423"/>
    </source>
</evidence>
<feature type="chain" id="PRO_1000145654" description="Multidrug resistance protein MdtB">
    <location>
        <begin position="1"/>
        <end position="1040"/>
    </location>
</feature>
<feature type="transmembrane region" description="Helical" evidence="1">
    <location>
        <begin position="16"/>
        <end position="36"/>
    </location>
</feature>
<feature type="transmembrane region" description="Helical" evidence="1">
    <location>
        <begin position="347"/>
        <end position="367"/>
    </location>
</feature>
<feature type="transmembrane region" description="Helical" evidence="1">
    <location>
        <begin position="369"/>
        <end position="389"/>
    </location>
</feature>
<feature type="transmembrane region" description="Helical" evidence="1">
    <location>
        <begin position="396"/>
        <end position="416"/>
    </location>
</feature>
<feature type="transmembrane region" description="Helical" evidence="1">
    <location>
        <begin position="440"/>
        <end position="460"/>
    </location>
</feature>
<feature type="transmembrane region" description="Helical" evidence="1">
    <location>
        <begin position="472"/>
        <end position="492"/>
    </location>
</feature>
<feature type="transmembrane region" description="Helical" evidence="1">
    <location>
        <begin position="537"/>
        <end position="557"/>
    </location>
</feature>
<feature type="transmembrane region" description="Helical" evidence="1">
    <location>
        <begin position="863"/>
        <end position="883"/>
    </location>
</feature>
<feature type="transmembrane region" description="Helical" evidence="1">
    <location>
        <begin position="888"/>
        <end position="908"/>
    </location>
</feature>
<feature type="transmembrane region" description="Helical" evidence="1">
    <location>
        <begin position="911"/>
        <end position="931"/>
    </location>
</feature>
<feature type="transmembrane region" description="Helical" evidence="1">
    <location>
        <begin position="968"/>
        <end position="988"/>
    </location>
</feature>
<feature type="transmembrane region" description="Helical" evidence="1">
    <location>
        <begin position="998"/>
        <end position="1018"/>
    </location>
</feature>
<gene>
    <name evidence="1" type="primary">mdtB</name>
    <name type="ordered locus">EcSMS35_0985</name>
</gene>
<dbReference type="EMBL" id="CP000970">
    <property type="protein sequence ID" value="ACB16550.1"/>
    <property type="molecule type" value="Genomic_DNA"/>
</dbReference>
<dbReference type="RefSeq" id="WP_001197878.1">
    <property type="nucleotide sequence ID" value="NC_010498.1"/>
</dbReference>
<dbReference type="SMR" id="B1LNW6"/>
<dbReference type="KEGG" id="ecm:EcSMS35_0985"/>
<dbReference type="HOGENOM" id="CLU_002755_1_2_6"/>
<dbReference type="Proteomes" id="UP000007011">
    <property type="component" value="Chromosome"/>
</dbReference>
<dbReference type="GO" id="GO:0005886">
    <property type="term" value="C:plasma membrane"/>
    <property type="evidence" value="ECO:0007669"/>
    <property type="project" value="UniProtKB-SubCell"/>
</dbReference>
<dbReference type="GO" id="GO:0042910">
    <property type="term" value="F:xenobiotic transmembrane transporter activity"/>
    <property type="evidence" value="ECO:0007669"/>
    <property type="project" value="TreeGrafter"/>
</dbReference>
<dbReference type="FunFam" id="1.20.1640.10:FF:000001">
    <property type="entry name" value="Efflux pump membrane transporter"/>
    <property type="match status" value="1"/>
</dbReference>
<dbReference type="FunFam" id="3.30.70.1430:FF:000001">
    <property type="entry name" value="Efflux pump membrane transporter"/>
    <property type="match status" value="1"/>
</dbReference>
<dbReference type="FunFam" id="3.30.2090.10:FF:000003">
    <property type="entry name" value="Multidrug resistance protein MdtB"/>
    <property type="match status" value="1"/>
</dbReference>
<dbReference type="FunFam" id="3.30.2090.10:FF:000006">
    <property type="entry name" value="Multidrug resistance protein MdtB"/>
    <property type="match status" value="1"/>
</dbReference>
<dbReference type="Gene3D" id="3.30.70.1430">
    <property type="entry name" value="Multidrug efflux transporter AcrB pore domain"/>
    <property type="match status" value="2"/>
</dbReference>
<dbReference type="Gene3D" id="3.30.70.1440">
    <property type="entry name" value="Multidrug efflux transporter AcrB pore domain"/>
    <property type="match status" value="1"/>
</dbReference>
<dbReference type="Gene3D" id="3.30.70.1320">
    <property type="entry name" value="Multidrug efflux transporter AcrB pore domain like"/>
    <property type="match status" value="1"/>
</dbReference>
<dbReference type="Gene3D" id="3.30.2090.10">
    <property type="entry name" value="Multidrug efflux transporter AcrB TolC docking domain, DN and DC subdomains"/>
    <property type="match status" value="2"/>
</dbReference>
<dbReference type="Gene3D" id="1.20.1640.10">
    <property type="entry name" value="Multidrug efflux transporter AcrB transmembrane domain"/>
    <property type="match status" value="2"/>
</dbReference>
<dbReference type="HAMAP" id="MF_01423">
    <property type="entry name" value="MdtB"/>
    <property type="match status" value="1"/>
</dbReference>
<dbReference type="InterPro" id="IPR027463">
    <property type="entry name" value="AcrB_DN_DC_subdom"/>
</dbReference>
<dbReference type="InterPro" id="IPR001036">
    <property type="entry name" value="Acrflvin-R"/>
</dbReference>
<dbReference type="InterPro" id="IPR022831">
    <property type="entry name" value="Multidrug-R_MdtB"/>
</dbReference>
<dbReference type="NCBIfam" id="NF007798">
    <property type="entry name" value="PRK10503.1"/>
    <property type="match status" value="1"/>
</dbReference>
<dbReference type="NCBIfam" id="NF033617">
    <property type="entry name" value="RND_permease_2"/>
    <property type="match status" value="1"/>
</dbReference>
<dbReference type="PANTHER" id="PTHR32063">
    <property type="match status" value="1"/>
</dbReference>
<dbReference type="PANTHER" id="PTHR32063:SF21">
    <property type="entry name" value="MULTIDRUG RESISTANCE PROTEIN MDTB"/>
    <property type="match status" value="1"/>
</dbReference>
<dbReference type="Pfam" id="PF00873">
    <property type="entry name" value="ACR_tran"/>
    <property type="match status" value="1"/>
</dbReference>
<dbReference type="PRINTS" id="PR00702">
    <property type="entry name" value="ACRIFLAVINRP"/>
</dbReference>
<dbReference type="SUPFAM" id="SSF82693">
    <property type="entry name" value="Multidrug efflux transporter AcrB pore domain, PN1, PN2, PC1 and PC2 subdomains"/>
    <property type="match status" value="3"/>
</dbReference>
<dbReference type="SUPFAM" id="SSF82714">
    <property type="entry name" value="Multidrug efflux transporter AcrB TolC docking domain, DN and DC subdomains"/>
    <property type="match status" value="2"/>
</dbReference>
<dbReference type="SUPFAM" id="SSF82866">
    <property type="entry name" value="Multidrug efflux transporter AcrB transmembrane domain"/>
    <property type="match status" value="2"/>
</dbReference>
<keyword id="KW-0997">Cell inner membrane</keyword>
<keyword id="KW-1003">Cell membrane</keyword>
<keyword id="KW-0472">Membrane</keyword>
<keyword id="KW-0812">Transmembrane</keyword>
<keyword id="KW-1133">Transmembrane helix</keyword>
<keyword id="KW-0813">Transport</keyword>
<comment type="function">
    <text evidence="1">The MdtABC tripartite complex confers resistance against novobiocin and deoxycholate.</text>
</comment>
<comment type="subunit">
    <text evidence="1">Part of a tripartite efflux system composed of MdtA, MdtB and MdtC. MdtB forms a heteromultimer with MdtC.</text>
</comment>
<comment type="subcellular location">
    <subcellularLocation>
        <location evidence="1">Cell inner membrane</location>
        <topology evidence="1">Multi-pass membrane protein</topology>
    </subcellularLocation>
</comment>
<comment type="induction">
    <text>The mdtABC operon is transcriptionally activated by BaeR.</text>
</comment>
<comment type="similarity">
    <text evidence="1">Belongs to the resistance-nodulation-cell division (RND) (TC 2.A.6) family. MdtB subfamily.</text>
</comment>
<proteinExistence type="evidence at transcript level"/>
<accession>B1LNW6</accession>
<protein>
    <recommendedName>
        <fullName evidence="1">Multidrug resistance protein MdtB</fullName>
    </recommendedName>
    <alternativeName>
        <fullName evidence="1">Multidrug transporter MdtB</fullName>
    </alternativeName>
</protein>
<sequence length="1040" mass="112096">MQVLPPSSTGGPSRLFIMRPVATTLLMVAILLAGIIGYRALPVSALPEVDYPTIQVVTLYPGASPDVMTSAVTAPLERQFGQMSGLKQMSSQSSGGASVITLQFQLTLPLDVAEQEVQAAINAATNLLPSDLPNPPVYSKVNPADPPIMTLAVTSTAMPMTQVEDMVETRVAQKISQISGVGLVTLSGGQRPAVRVKLNAQAIAALGLTSETVRTAITGANVNSAKGSLDGPSRAVTLSANDQMQSAEEYRQLIIAYQNGAPIRLGDVATVEQGAENSWLGAWANKEQAIVMNVQRQPGANIISTADSIRQMLPQLTESLPKSVKVTVLSDRTTNIRASVDDTQFELMMAIALVVMIIYLFLRNIPATIIPGVAVPLSLIGTFAVMVFLDFSINNLTLMALTIATGFVVDDAIVVIENISRYIEKGEKPLAAALKGAGEIGFTIISLTFSLIAVLIPLLFMGDIVGRLFREFAITLAVAILISAVVSLTLTPMMCARMLSQESLRKQNRFSRASEKMFDRIIAAYGRGLAKVLNHPWLTLSVALSTLLLSVLLWVFIPKGFFPVQDNGIIQGTLQAPQSSSFANMAQRQRQVADVILQDPAVQSLTSFVGVDGTNPSLNSARLQINLKPLDERDDRVQKVIARLQTAVDKVPGVDLFLQPTQDLTIDTQVSRTQYQFTLQATSLDALSTWVPQLMEKLQQLPQLSDVSSDWQDKGLVAYVNVDRDSASRLGISMADVDNALYNAFGQRLISTIYTQANQYRVVLEHNTENTPGLAALDTIRLTSSDGGVVPLSSIAKIEQRFAPLSINHLDQFPVTTISFNVPDNYSLGDAVQAIMDTEKTLNLPVDITTQFQGSTLAFQSALGSTVWLIVAAVVAMYIVLGILYESFIHPITILSTLPTAGVGALLALMIAGSELDVIAIIGIILLIGIVKKNAIMMIDFALAAEREQGMSPREAIYQACLLRFRPILMTTLAALLGALPLMLSTGVGAELRRPLGIGMVGGLIVSQVLTLFTTPVIYLLFDRLALWTKSRFARHEEEA</sequence>
<reference key="1">
    <citation type="journal article" date="2008" name="J. Bacteriol.">
        <title>Insights into the environmental resistance gene pool from the genome sequence of the multidrug-resistant environmental isolate Escherichia coli SMS-3-5.</title>
        <authorList>
            <person name="Fricke W.F."/>
            <person name="Wright M.S."/>
            <person name="Lindell A.H."/>
            <person name="Harkins D.M."/>
            <person name="Baker-Austin C."/>
            <person name="Ravel J."/>
            <person name="Stepanauskas R."/>
        </authorList>
    </citation>
    <scope>NUCLEOTIDE SEQUENCE [LARGE SCALE GENOMIC DNA]</scope>
    <source>
        <strain>SMS-3-5 / SECEC</strain>
    </source>
</reference>